<organism>
    <name type="scientific">Alkalilimnicola ehrlichii (strain ATCC BAA-1101 / DSM 17681 / MLHE-1)</name>
    <dbReference type="NCBI Taxonomy" id="187272"/>
    <lineage>
        <taxon>Bacteria</taxon>
        <taxon>Pseudomonadati</taxon>
        <taxon>Pseudomonadota</taxon>
        <taxon>Gammaproteobacteria</taxon>
        <taxon>Chromatiales</taxon>
        <taxon>Ectothiorhodospiraceae</taxon>
        <taxon>Alkalilimnicola</taxon>
    </lineage>
</organism>
<evidence type="ECO:0000255" key="1">
    <source>
        <dbReference type="HAMAP-Rule" id="MF_00147"/>
    </source>
</evidence>
<accession>Q0A773</accession>
<sequence>MRKPMVAGNWKMNGSLALVNDMGRALADVDCSAVDVLVCPPFPYIGPLRRAVPDESGVALGGQDVSRYDSGAYTGEVAGAMLAEMGCRHVIVGHSERRAMHAETDEVVVDKVQAALRAGLTPIVCVGETLEARDAGETEQVVGRQLDAVLELGGFVVEKLVLAYEPVWAIGTGRTASPEQAQAVHAFIRQRAADALGDELAQRLPILYGGSVKPGNARELFGCADVDGGLIGGASLDPDGFLEIISAARP</sequence>
<proteinExistence type="inferred from homology"/>
<name>TPIS_ALKEH</name>
<keyword id="KW-0963">Cytoplasm</keyword>
<keyword id="KW-0312">Gluconeogenesis</keyword>
<keyword id="KW-0324">Glycolysis</keyword>
<keyword id="KW-0413">Isomerase</keyword>
<keyword id="KW-1185">Reference proteome</keyword>
<reference key="1">
    <citation type="submission" date="2006-08" db="EMBL/GenBank/DDBJ databases">
        <title>Complete sequence of Alkalilimnicola ehrilichei MLHE-1.</title>
        <authorList>
            <person name="Copeland A."/>
            <person name="Lucas S."/>
            <person name="Lapidus A."/>
            <person name="Barry K."/>
            <person name="Detter J.C."/>
            <person name="Glavina del Rio T."/>
            <person name="Hammon N."/>
            <person name="Israni S."/>
            <person name="Dalin E."/>
            <person name="Tice H."/>
            <person name="Pitluck S."/>
            <person name="Sims D."/>
            <person name="Brettin T."/>
            <person name="Bruce D."/>
            <person name="Han C."/>
            <person name="Tapia R."/>
            <person name="Gilna P."/>
            <person name="Schmutz J."/>
            <person name="Larimer F."/>
            <person name="Land M."/>
            <person name="Hauser L."/>
            <person name="Kyrpides N."/>
            <person name="Mikhailova N."/>
            <person name="Oremland R.S."/>
            <person name="Hoeft S.E."/>
            <person name="Switzer-Blum J."/>
            <person name="Kulp T."/>
            <person name="King G."/>
            <person name="Tabita R."/>
            <person name="Witte B."/>
            <person name="Santini J.M."/>
            <person name="Basu P."/>
            <person name="Hollibaugh J.T."/>
            <person name="Xie G."/>
            <person name="Stolz J.F."/>
            <person name="Richardson P."/>
        </authorList>
    </citation>
    <scope>NUCLEOTIDE SEQUENCE [LARGE SCALE GENOMIC DNA]</scope>
    <source>
        <strain>ATCC BAA-1101 / DSM 17681 / MLHE-1</strain>
    </source>
</reference>
<feature type="chain" id="PRO_0000307422" description="Triosephosphate isomerase">
    <location>
        <begin position="1"/>
        <end position="250"/>
    </location>
</feature>
<feature type="active site" description="Electrophile" evidence="1">
    <location>
        <position position="94"/>
    </location>
</feature>
<feature type="active site" description="Proton acceptor" evidence="1">
    <location>
        <position position="165"/>
    </location>
</feature>
<feature type="binding site" evidence="1">
    <location>
        <begin position="9"/>
        <end position="11"/>
    </location>
    <ligand>
        <name>substrate</name>
    </ligand>
</feature>
<feature type="binding site" evidence="1">
    <location>
        <position position="171"/>
    </location>
    <ligand>
        <name>substrate</name>
    </ligand>
</feature>
<feature type="binding site" evidence="1">
    <location>
        <position position="211"/>
    </location>
    <ligand>
        <name>substrate</name>
    </ligand>
</feature>
<feature type="binding site" evidence="1">
    <location>
        <begin position="232"/>
        <end position="233"/>
    </location>
    <ligand>
        <name>substrate</name>
    </ligand>
</feature>
<protein>
    <recommendedName>
        <fullName evidence="1">Triosephosphate isomerase</fullName>
        <shortName evidence="1">TIM</shortName>
        <shortName evidence="1">TPI</shortName>
        <ecNumber evidence="1">5.3.1.1</ecNumber>
    </recommendedName>
    <alternativeName>
        <fullName evidence="1">Triose-phosphate isomerase</fullName>
    </alternativeName>
</protein>
<gene>
    <name evidence="1" type="primary">tpiA</name>
    <name type="ordered locus">Mlg_1972</name>
</gene>
<comment type="function">
    <text evidence="1">Involved in the gluconeogenesis. Catalyzes stereospecifically the conversion of dihydroxyacetone phosphate (DHAP) to D-glyceraldehyde-3-phosphate (G3P).</text>
</comment>
<comment type="catalytic activity">
    <reaction evidence="1">
        <text>D-glyceraldehyde 3-phosphate = dihydroxyacetone phosphate</text>
        <dbReference type="Rhea" id="RHEA:18585"/>
        <dbReference type="ChEBI" id="CHEBI:57642"/>
        <dbReference type="ChEBI" id="CHEBI:59776"/>
        <dbReference type="EC" id="5.3.1.1"/>
    </reaction>
</comment>
<comment type="pathway">
    <text evidence="1">Carbohydrate biosynthesis; gluconeogenesis.</text>
</comment>
<comment type="pathway">
    <text evidence="1">Carbohydrate degradation; glycolysis; D-glyceraldehyde 3-phosphate from glycerone phosphate: step 1/1.</text>
</comment>
<comment type="subunit">
    <text evidence="1">Homodimer.</text>
</comment>
<comment type="subcellular location">
    <subcellularLocation>
        <location evidence="1">Cytoplasm</location>
    </subcellularLocation>
</comment>
<comment type="similarity">
    <text evidence="1">Belongs to the triosephosphate isomerase family.</text>
</comment>
<dbReference type="EC" id="5.3.1.1" evidence="1"/>
<dbReference type="EMBL" id="CP000453">
    <property type="protein sequence ID" value="ABI57314.1"/>
    <property type="molecule type" value="Genomic_DNA"/>
</dbReference>
<dbReference type="RefSeq" id="WP_011629708.1">
    <property type="nucleotide sequence ID" value="NC_008340.1"/>
</dbReference>
<dbReference type="SMR" id="Q0A773"/>
<dbReference type="KEGG" id="aeh:Mlg_1972"/>
<dbReference type="eggNOG" id="COG0149">
    <property type="taxonomic scope" value="Bacteria"/>
</dbReference>
<dbReference type="HOGENOM" id="CLU_024251_2_3_6"/>
<dbReference type="OrthoDB" id="9809429at2"/>
<dbReference type="UniPathway" id="UPA00109">
    <property type="reaction ID" value="UER00189"/>
</dbReference>
<dbReference type="UniPathway" id="UPA00138"/>
<dbReference type="Proteomes" id="UP000001962">
    <property type="component" value="Chromosome"/>
</dbReference>
<dbReference type="GO" id="GO:0005829">
    <property type="term" value="C:cytosol"/>
    <property type="evidence" value="ECO:0007669"/>
    <property type="project" value="TreeGrafter"/>
</dbReference>
<dbReference type="GO" id="GO:0004807">
    <property type="term" value="F:triose-phosphate isomerase activity"/>
    <property type="evidence" value="ECO:0007669"/>
    <property type="project" value="UniProtKB-UniRule"/>
</dbReference>
<dbReference type="GO" id="GO:0006094">
    <property type="term" value="P:gluconeogenesis"/>
    <property type="evidence" value="ECO:0007669"/>
    <property type="project" value="UniProtKB-UniRule"/>
</dbReference>
<dbReference type="GO" id="GO:0046166">
    <property type="term" value="P:glyceraldehyde-3-phosphate biosynthetic process"/>
    <property type="evidence" value="ECO:0007669"/>
    <property type="project" value="TreeGrafter"/>
</dbReference>
<dbReference type="GO" id="GO:0019563">
    <property type="term" value="P:glycerol catabolic process"/>
    <property type="evidence" value="ECO:0007669"/>
    <property type="project" value="TreeGrafter"/>
</dbReference>
<dbReference type="GO" id="GO:0006096">
    <property type="term" value="P:glycolytic process"/>
    <property type="evidence" value="ECO:0007669"/>
    <property type="project" value="UniProtKB-UniRule"/>
</dbReference>
<dbReference type="CDD" id="cd00311">
    <property type="entry name" value="TIM"/>
    <property type="match status" value="1"/>
</dbReference>
<dbReference type="FunFam" id="3.20.20.70:FF:000020">
    <property type="entry name" value="Triosephosphate isomerase"/>
    <property type="match status" value="1"/>
</dbReference>
<dbReference type="Gene3D" id="3.20.20.70">
    <property type="entry name" value="Aldolase class I"/>
    <property type="match status" value="1"/>
</dbReference>
<dbReference type="HAMAP" id="MF_00147_B">
    <property type="entry name" value="TIM_B"/>
    <property type="match status" value="1"/>
</dbReference>
<dbReference type="InterPro" id="IPR013785">
    <property type="entry name" value="Aldolase_TIM"/>
</dbReference>
<dbReference type="InterPro" id="IPR035990">
    <property type="entry name" value="TIM_sf"/>
</dbReference>
<dbReference type="InterPro" id="IPR022896">
    <property type="entry name" value="TrioseP_Isoase_bac/euk"/>
</dbReference>
<dbReference type="InterPro" id="IPR000652">
    <property type="entry name" value="Triosephosphate_isomerase"/>
</dbReference>
<dbReference type="InterPro" id="IPR020861">
    <property type="entry name" value="Triosephosphate_isomerase_AS"/>
</dbReference>
<dbReference type="NCBIfam" id="TIGR00419">
    <property type="entry name" value="tim"/>
    <property type="match status" value="1"/>
</dbReference>
<dbReference type="PANTHER" id="PTHR21139">
    <property type="entry name" value="TRIOSEPHOSPHATE ISOMERASE"/>
    <property type="match status" value="1"/>
</dbReference>
<dbReference type="PANTHER" id="PTHR21139:SF42">
    <property type="entry name" value="TRIOSEPHOSPHATE ISOMERASE"/>
    <property type="match status" value="1"/>
</dbReference>
<dbReference type="Pfam" id="PF00121">
    <property type="entry name" value="TIM"/>
    <property type="match status" value="1"/>
</dbReference>
<dbReference type="SUPFAM" id="SSF51351">
    <property type="entry name" value="Triosephosphate isomerase (TIM)"/>
    <property type="match status" value="1"/>
</dbReference>
<dbReference type="PROSITE" id="PS00171">
    <property type="entry name" value="TIM_1"/>
    <property type="match status" value="1"/>
</dbReference>
<dbReference type="PROSITE" id="PS51440">
    <property type="entry name" value="TIM_2"/>
    <property type="match status" value="1"/>
</dbReference>